<dbReference type="EC" id="5.3.1.16" evidence="1"/>
<dbReference type="EMBL" id="AP009049">
    <property type="protein sequence ID" value="BAH06246.1"/>
    <property type="molecule type" value="Genomic_DNA"/>
</dbReference>
<dbReference type="RefSeq" id="WP_012101686.1">
    <property type="nucleotide sequence ID" value="NC_011837.1"/>
</dbReference>
<dbReference type="SMR" id="B9E171"/>
<dbReference type="KEGG" id="ckr:CKR_1195"/>
<dbReference type="HOGENOM" id="CLU_048577_1_2_9"/>
<dbReference type="UniPathway" id="UPA00031">
    <property type="reaction ID" value="UER00009"/>
</dbReference>
<dbReference type="Proteomes" id="UP000007969">
    <property type="component" value="Chromosome"/>
</dbReference>
<dbReference type="GO" id="GO:0005737">
    <property type="term" value="C:cytoplasm"/>
    <property type="evidence" value="ECO:0007669"/>
    <property type="project" value="UniProtKB-SubCell"/>
</dbReference>
<dbReference type="GO" id="GO:0003949">
    <property type="term" value="F:1-(5-phosphoribosyl)-5-[(5-phosphoribosylamino)methylideneamino]imidazole-4-carboxamide isomerase activity"/>
    <property type="evidence" value="ECO:0007669"/>
    <property type="project" value="UniProtKB-UniRule"/>
</dbReference>
<dbReference type="GO" id="GO:0000105">
    <property type="term" value="P:L-histidine biosynthetic process"/>
    <property type="evidence" value="ECO:0007669"/>
    <property type="project" value="UniProtKB-UniRule"/>
</dbReference>
<dbReference type="GO" id="GO:0000162">
    <property type="term" value="P:L-tryptophan biosynthetic process"/>
    <property type="evidence" value="ECO:0007669"/>
    <property type="project" value="TreeGrafter"/>
</dbReference>
<dbReference type="CDD" id="cd04732">
    <property type="entry name" value="HisA"/>
    <property type="match status" value="1"/>
</dbReference>
<dbReference type="FunFam" id="3.20.20.70:FF:000009">
    <property type="entry name" value="1-(5-phosphoribosyl)-5-[(5-phosphoribosylamino)methylideneamino] imidazole-4-carboxamide isomerase"/>
    <property type="match status" value="1"/>
</dbReference>
<dbReference type="Gene3D" id="3.20.20.70">
    <property type="entry name" value="Aldolase class I"/>
    <property type="match status" value="1"/>
</dbReference>
<dbReference type="HAMAP" id="MF_01014">
    <property type="entry name" value="HisA"/>
    <property type="match status" value="1"/>
</dbReference>
<dbReference type="InterPro" id="IPR013785">
    <property type="entry name" value="Aldolase_TIM"/>
</dbReference>
<dbReference type="InterPro" id="IPR006062">
    <property type="entry name" value="His_biosynth"/>
</dbReference>
<dbReference type="InterPro" id="IPR006063">
    <property type="entry name" value="HisA_bact_arch"/>
</dbReference>
<dbReference type="InterPro" id="IPR044524">
    <property type="entry name" value="Isoase_HisA-like"/>
</dbReference>
<dbReference type="InterPro" id="IPR023016">
    <property type="entry name" value="Isoase_HisA-like_bact"/>
</dbReference>
<dbReference type="InterPro" id="IPR011060">
    <property type="entry name" value="RibuloseP-bd_barrel"/>
</dbReference>
<dbReference type="NCBIfam" id="TIGR00007">
    <property type="entry name" value="1-(5-phosphoribosyl)-5-[(5-phosphoribosylamino)methylideneamino]imidazole-4-carboxamide isomerase"/>
    <property type="match status" value="1"/>
</dbReference>
<dbReference type="PANTHER" id="PTHR43090">
    <property type="entry name" value="1-(5-PHOSPHORIBOSYL)-5-[(5-PHOSPHORIBOSYLAMINO)METHYLIDENEAMINO] IMIDAZOLE-4-CARBOXAMIDE ISOMERASE"/>
    <property type="match status" value="1"/>
</dbReference>
<dbReference type="PANTHER" id="PTHR43090:SF2">
    <property type="entry name" value="1-(5-PHOSPHORIBOSYL)-5-[(5-PHOSPHORIBOSYLAMINO)METHYLIDENEAMINO] IMIDAZOLE-4-CARBOXAMIDE ISOMERASE"/>
    <property type="match status" value="1"/>
</dbReference>
<dbReference type="Pfam" id="PF00977">
    <property type="entry name" value="His_biosynth"/>
    <property type="match status" value="1"/>
</dbReference>
<dbReference type="SUPFAM" id="SSF51366">
    <property type="entry name" value="Ribulose-phoshate binding barrel"/>
    <property type="match status" value="1"/>
</dbReference>
<name>HIS4_CLOK1</name>
<gene>
    <name evidence="1" type="primary">hisA</name>
    <name type="ordered locus">CKR_1195</name>
</gene>
<proteinExistence type="inferred from homology"/>
<organism>
    <name type="scientific">Clostridium kluyveri (strain NBRC 12016)</name>
    <dbReference type="NCBI Taxonomy" id="583346"/>
    <lineage>
        <taxon>Bacteria</taxon>
        <taxon>Bacillati</taxon>
        <taxon>Bacillota</taxon>
        <taxon>Clostridia</taxon>
        <taxon>Eubacteriales</taxon>
        <taxon>Clostridiaceae</taxon>
        <taxon>Clostridium</taxon>
    </lineage>
</organism>
<keyword id="KW-0028">Amino-acid biosynthesis</keyword>
<keyword id="KW-0963">Cytoplasm</keyword>
<keyword id="KW-0368">Histidine biosynthesis</keyword>
<keyword id="KW-0413">Isomerase</keyword>
<evidence type="ECO:0000255" key="1">
    <source>
        <dbReference type="HAMAP-Rule" id="MF_01014"/>
    </source>
</evidence>
<accession>B9E171</accession>
<feature type="chain" id="PRO_1000148964" description="1-(5-phosphoribosyl)-5-[(5-phosphoribosylamino)methylideneamino] imidazole-4-carboxamide isomerase">
    <location>
        <begin position="1"/>
        <end position="238"/>
    </location>
</feature>
<feature type="active site" description="Proton acceptor" evidence="1">
    <location>
        <position position="8"/>
    </location>
</feature>
<feature type="active site" description="Proton donor" evidence="1">
    <location>
        <position position="129"/>
    </location>
</feature>
<reference key="1">
    <citation type="submission" date="2005-09" db="EMBL/GenBank/DDBJ databases">
        <title>Complete genome sequence of Clostridium kluyveri and comparative genomics of Clostridia species.</title>
        <authorList>
            <person name="Inui M."/>
            <person name="Nonaka H."/>
            <person name="Shinoda Y."/>
            <person name="Ikenaga Y."/>
            <person name="Abe M."/>
            <person name="Naito K."/>
            <person name="Vertes A.A."/>
            <person name="Yukawa H."/>
        </authorList>
    </citation>
    <scope>NUCLEOTIDE SEQUENCE [LARGE SCALE GENOMIC DNA]</scope>
    <source>
        <strain>NBRC 12016</strain>
    </source>
</reference>
<comment type="catalytic activity">
    <reaction evidence="1">
        <text>1-(5-phospho-beta-D-ribosyl)-5-[(5-phospho-beta-D-ribosylamino)methylideneamino]imidazole-4-carboxamide = 5-[(5-phospho-1-deoxy-D-ribulos-1-ylimino)methylamino]-1-(5-phospho-beta-D-ribosyl)imidazole-4-carboxamide</text>
        <dbReference type="Rhea" id="RHEA:15469"/>
        <dbReference type="ChEBI" id="CHEBI:58435"/>
        <dbReference type="ChEBI" id="CHEBI:58525"/>
        <dbReference type="EC" id="5.3.1.16"/>
    </reaction>
</comment>
<comment type="pathway">
    <text evidence="1">Amino-acid biosynthesis; L-histidine biosynthesis; L-histidine from 5-phospho-alpha-D-ribose 1-diphosphate: step 4/9.</text>
</comment>
<comment type="subcellular location">
    <subcellularLocation>
        <location evidence="1">Cytoplasm</location>
    </subcellularLocation>
</comment>
<comment type="similarity">
    <text evidence="1">Belongs to the HisA/HisF family.</text>
</comment>
<protein>
    <recommendedName>
        <fullName evidence="1">1-(5-phosphoribosyl)-5-[(5-phosphoribosylamino)methylideneamino] imidazole-4-carboxamide isomerase</fullName>
        <ecNumber evidence="1">5.3.1.16</ecNumber>
    </recommendedName>
    <alternativeName>
        <fullName evidence="1">Phosphoribosylformimino-5-aminoimidazole carboxamide ribotide isomerase</fullName>
    </alternativeName>
</protein>
<sequence>MIILPAIDLKGGKCVRLYKGDMNSQEVVARDPFETALKFKSEGAQYLHMVDLDGALKGSGENLDIISKIVKNVDVPIEVGGGIRNIETIDKFIKLGVSRVILGTAALKNKELVIKAVENYDEKIAVGIDAKDGVPAADGWTTLSKTNYIDFGKEMEKIGVQTLIFTDISKDGTLEGTNLEQLLKLKNSVKCNVIASGGIKDIEDIKSLKKENVYGAIVGKAIYAKTLSLKKAIEIGGN</sequence>